<gene>
    <name evidence="1" type="primary">hpf</name>
    <name type="ordered locus">SAS0717</name>
</gene>
<organism>
    <name type="scientific">Staphylococcus aureus (strain MSSA476)</name>
    <dbReference type="NCBI Taxonomy" id="282459"/>
    <lineage>
        <taxon>Bacteria</taxon>
        <taxon>Bacillati</taxon>
        <taxon>Bacillota</taxon>
        <taxon>Bacilli</taxon>
        <taxon>Bacillales</taxon>
        <taxon>Staphylococcaceae</taxon>
        <taxon>Staphylococcus</taxon>
    </lineage>
</organism>
<sequence length="190" mass="22213">MIRFEIHGDNLTITDAIRNYIEEKIGKLERYFNDVPNAVAHVKVKTYSNSATKIEVTIPLKNVTLRAEERNDDLYAGIDLINNKLERQVRKYKTRINRKSRDRGDQEVFVAELQEMQETQVDNDAYDDNEIEIIRSKEFSLKPMDSEEAVLQMNLLGHDFFVFTDRETDGTSIVYRRKDGKYGLIQTSEQ</sequence>
<comment type="function">
    <text evidence="1">Required for dimerization of active 70S ribosomes into 100S ribosomes in stationary phase; 100S ribosomes are translationally inactive and sometimes present during exponential growth.</text>
</comment>
<comment type="subunit">
    <text evidence="1">Interacts with 100S ribosomes.</text>
</comment>
<comment type="subcellular location">
    <subcellularLocation>
        <location evidence="1">Cytoplasm</location>
    </subcellularLocation>
</comment>
<comment type="similarity">
    <text evidence="1">Belongs to the HPF/YfiA ribosome-associated protein family. Long HPF subfamily.</text>
</comment>
<keyword id="KW-0963">Cytoplasm</keyword>
<keyword id="KW-0810">Translation regulation</keyword>
<protein>
    <recommendedName>
        <fullName evidence="1">Ribosome hibernation promotion factor</fullName>
        <shortName evidence="1">HPF</shortName>
    </recommendedName>
</protein>
<evidence type="ECO:0000255" key="1">
    <source>
        <dbReference type="HAMAP-Rule" id="MF_00839"/>
    </source>
</evidence>
<proteinExistence type="inferred from homology"/>
<accession>Q6GB78</accession>
<dbReference type="EMBL" id="BX571857">
    <property type="protein sequence ID" value="CAG42493.1"/>
    <property type="molecule type" value="Genomic_DNA"/>
</dbReference>
<dbReference type="RefSeq" id="WP_000617735.1">
    <property type="nucleotide sequence ID" value="NC_002953.3"/>
</dbReference>
<dbReference type="SMR" id="Q6GB78"/>
<dbReference type="KEGG" id="sas:SAS0717"/>
<dbReference type="HOGENOM" id="CLU_071472_0_3_9"/>
<dbReference type="GO" id="GO:0022627">
    <property type="term" value="C:cytosolic small ribosomal subunit"/>
    <property type="evidence" value="ECO:0007669"/>
    <property type="project" value="TreeGrafter"/>
</dbReference>
<dbReference type="GO" id="GO:0043024">
    <property type="term" value="F:ribosomal small subunit binding"/>
    <property type="evidence" value="ECO:0007669"/>
    <property type="project" value="TreeGrafter"/>
</dbReference>
<dbReference type="GO" id="GO:0045900">
    <property type="term" value="P:negative regulation of translational elongation"/>
    <property type="evidence" value="ECO:0007669"/>
    <property type="project" value="TreeGrafter"/>
</dbReference>
<dbReference type="CDD" id="cd00552">
    <property type="entry name" value="RaiA"/>
    <property type="match status" value="1"/>
</dbReference>
<dbReference type="FunFam" id="3.30.160.100:FF:000003">
    <property type="entry name" value="Ribosome hibernation promoting factor"/>
    <property type="match status" value="1"/>
</dbReference>
<dbReference type="FunFam" id="3.30.505.50:FF:000001">
    <property type="entry name" value="Ribosome hibernation promoting factor"/>
    <property type="match status" value="1"/>
</dbReference>
<dbReference type="Gene3D" id="3.30.160.100">
    <property type="entry name" value="Ribosome hibernation promotion factor-like"/>
    <property type="match status" value="1"/>
</dbReference>
<dbReference type="Gene3D" id="3.30.505.50">
    <property type="entry name" value="Sigma 54 modulation/S30EA ribosomal protein, C-terminal domain"/>
    <property type="match status" value="1"/>
</dbReference>
<dbReference type="HAMAP" id="MF_00839">
    <property type="entry name" value="HPF"/>
    <property type="match status" value="1"/>
</dbReference>
<dbReference type="InterPro" id="IPR050574">
    <property type="entry name" value="HPF/YfiA_ribosome-assoc"/>
</dbReference>
<dbReference type="InterPro" id="IPR034694">
    <property type="entry name" value="HPF_long/plastid"/>
</dbReference>
<dbReference type="InterPro" id="IPR036567">
    <property type="entry name" value="RHF-like"/>
</dbReference>
<dbReference type="InterPro" id="IPR003489">
    <property type="entry name" value="RHF/RaiA"/>
</dbReference>
<dbReference type="InterPro" id="IPR032528">
    <property type="entry name" value="Ribosom_S30AE_C"/>
</dbReference>
<dbReference type="InterPro" id="IPR038416">
    <property type="entry name" value="Ribosom_S30AE_C_sf"/>
</dbReference>
<dbReference type="NCBIfam" id="TIGR00741">
    <property type="entry name" value="yfiA"/>
    <property type="match status" value="1"/>
</dbReference>
<dbReference type="PANTHER" id="PTHR33231">
    <property type="entry name" value="30S RIBOSOMAL PROTEIN"/>
    <property type="match status" value="1"/>
</dbReference>
<dbReference type="PANTHER" id="PTHR33231:SF1">
    <property type="entry name" value="30S RIBOSOMAL PROTEIN"/>
    <property type="match status" value="1"/>
</dbReference>
<dbReference type="Pfam" id="PF16321">
    <property type="entry name" value="Ribosom_S30AE_C"/>
    <property type="match status" value="1"/>
</dbReference>
<dbReference type="Pfam" id="PF02482">
    <property type="entry name" value="Ribosomal_S30AE"/>
    <property type="match status" value="1"/>
</dbReference>
<dbReference type="SUPFAM" id="SSF69754">
    <property type="entry name" value="Ribosome binding protein Y (YfiA homologue)"/>
    <property type="match status" value="1"/>
</dbReference>
<name>HPF_STAAS</name>
<feature type="chain" id="PRO_0000291315" description="Ribosome hibernation promotion factor">
    <location>
        <begin position="1"/>
        <end position="190"/>
    </location>
</feature>
<reference key="1">
    <citation type="journal article" date="2004" name="Proc. Natl. Acad. Sci. U.S.A.">
        <title>Complete genomes of two clinical Staphylococcus aureus strains: evidence for the rapid evolution of virulence and drug resistance.</title>
        <authorList>
            <person name="Holden M.T.G."/>
            <person name="Feil E.J."/>
            <person name="Lindsay J.A."/>
            <person name="Peacock S.J."/>
            <person name="Day N.P.J."/>
            <person name="Enright M.C."/>
            <person name="Foster T.J."/>
            <person name="Moore C.E."/>
            <person name="Hurst L."/>
            <person name="Atkin R."/>
            <person name="Barron A."/>
            <person name="Bason N."/>
            <person name="Bentley S.D."/>
            <person name="Chillingworth C."/>
            <person name="Chillingworth T."/>
            <person name="Churcher C."/>
            <person name="Clark L."/>
            <person name="Corton C."/>
            <person name="Cronin A."/>
            <person name="Doggett J."/>
            <person name="Dowd L."/>
            <person name="Feltwell T."/>
            <person name="Hance Z."/>
            <person name="Harris B."/>
            <person name="Hauser H."/>
            <person name="Holroyd S."/>
            <person name="Jagels K."/>
            <person name="James K.D."/>
            <person name="Lennard N."/>
            <person name="Line A."/>
            <person name="Mayes R."/>
            <person name="Moule S."/>
            <person name="Mungall K."/>
            <person name="Ormond D."/>
            <person name="Quail M.A."/>
            <person name="Rabbinowitsch E."/>
            <person name="Rutherford K.M."/>
            <person name="Sanders M."/>
            <person name="Sharp S."/>
            <person name="Simmonds M."/>
            <person name="Stevens K."/>
            <person name="Whitehead S."/>
            <person name="Barrell B.G."/>
            <person name="Spratt B.G."/>
            <person name="Parkhill J."/>
        </authorList>
    </citation>
    <scope>NUCLEOTIDE SEQUENCE [LARGE SCALE GENOMIC DNA]</scope>
    <source>
        <strain>MSSA476</strain>
    </source>
</reference>